<gene>
    <name type="primary">AMDHD1</name>
    <name type="ORF">HMFT1272</name>
</gene>
<organism>
    <name type="scientific">Homo sapiens</name>
    <name type="common">Human</name>
    <dbReference type="NCBI Taxonomy" id="9606"/>
    <lineage>
        <taxon>Eukaryota</taxon>
        <taxon>Metazoa</taxon>
        <taxon>Chordata</taxon>
        <taxon>Craniata</taxon>
        <taxon>Vertebrata</taxon>
        <taxon>Euteleostomi</taxon>
        <taxon>Mammalia</taxon>
        <taxon>Eutheria</taxon>
        <taxon>Euarchontoglires</taxon>
        <taxon>Primates</taxon>
        <taxon>Haplorrhini</taxon>
        <taxon>Catarrhini</taxon>
        <taxon>Hominidae</taxon>
        <taxon>Homo</taxon>
    </lineage>
</organism>
<protein>
    <recommendedName>
        <fullName>Probable imidazolonepropionase</fullName>
        <ecNumber>3.5.2.7</ecNumber>
    </recommendedName>
    <alternativeName>
        <fullName>Amidohydrolase domain-containing protein 1</fullName>
    </alternativeName>
</protein>
<name>HUTI_HUMAN</name>
<feature type="chain" id="PRO_0000282582" description="Probable imidazolonepropionase">
    <location>
        <begin position="1"/>
        <end position="426"/>
    </location>
</feature>
<feature type="binding site" evidence="3">
    <location>
        <position position="159"/>
    </location>
    <ligand>
        <name>4-imidazolone-5-propanoate</name>
        <dbReference type="ChEBI" id="CHEBI:77893"/>
    </ligand>
</feature>
<feature type="binding site" evidence="4">
    <location>
        <position position="159"/>
    </location>
    <ligand>
        <name>N-formimidoyl-L-glutamate</name>
        <dbReference type="ChEBI" id="CHEBI:58928"/>
    </ligand>
</feature>
<feature type="binding site" evidence="3">
    <location>
        <position position="192"/>
    </location>
    <ligand>
        <name>4-imidazolone-5-propanoate</name>
        <dbReference type="ChEBI" id="CHEBI:77893"/>
    </ligand>
</feature>
<feature type="binding site" evidence="2">
    <location>
        <position position="260"/>
    </location>
    <ligand>
        <name>Fe(3+)</name>
        <dbReference type="ChEBI" id="CHEBI:29034"/>
    </ligand>
</feature>
<feature type="binding site" evidence="3">
    <location>
        <position position="260"/>
    </location>
    <ligand>
        <name>Zn(2+)</name>
        <dbReference type="ChEBI" id="CHEBI:29105"/>
    </ligand>
</feature>
<feature type="binding site" evidence="3">
    <location>
        <position position="263"/>
    </location>
    <ligand>
        <name>4-imidazolone-5-propanoate</name>
        <dbReference type="ChEBI" id="CHEBI:77893"/>
    </ligand>
</feature>
<feature type="binding site" evidence="2">
    <location>
        <position position="334"/>
    </location>
    <ligand>
        <name>Fe(3+)</name>
        <dbReference type="ChEBI" id="CHEBI:29034"/>
    </ligand>
</feature>
<feature type="binding site" evidence="3">
    <location>
        <position position="334"/>
    </location>
    <ligand>
        <name>Zn(2+)</name>
        <dbReference type="ChEBI" id="CHEBI:29105"/>
    </ligand>
</feature>
<feature type="binding site" evidence="4">
    <location>
        <position position="336"/>
    </location>
    <ligand>
        <name>N-formimidoyl-L-glutamate</name>
        <dbReference type="ChEBI" id="CHEBI:58928"/>
    </ligand>
</feature>
<feature type="sequence variant" id="VAR_031419" description="In dbSNP:rs7955450." evidence="5 6 7 8">
    <original>S</original>
    <variation>G</variation>
    <location>
        <position position="3"/>
    </location>
</feature>
<feature type="sequence variant" id="VAR_031420" description="In dbSNP:rs17024904.">
    <original>P</original>
    <variation>H</variation>
    <location>
        <position position="360"/>
    </location>
</feature>
<comment type="catalytic activity">
    <reaction>
        <text>4-imidazolone-5-propanoate + H2O = N-formimidoyl-L-glutamate</text>
        <dbReference type="Rhea" id="RHEA:23660"/>
        <dbReference type="ChEBI" id="CHEBI:15377"/>
        <dbReference type="ChEBI" id="CHEBI:58928"/>
        <dbReference type="ChEBI" id="CHEBI:77893"/>
        <dbReference type="EC" id="3.5.2.7"/>
    </reaction>
</comment>
<comment type="cofactor">
    <cofactor evidence="1">
        <name>Zn(2+)</name>
        <dbReference type="ChEBI" id="CHEBI:29105"/>
    </cofactor>
    <cofactor evidence="1">
        <name>Fe(3+)</name>
        <dbReference type="ChEBI" id="CHEBI:29034"/>
    </cofactor>
    <text evidence="1">Binds 1 zinc or iron ion per subunit.</text>
</comment>
<comment type="pathway">
    <text>Amino-acid degradation; L-histidine degradation into L-glutamate; N-formimidoyl-L-glutamate from L-histidine: step 3/3.</text>
</comment>
<comment type="interaction">
    <interactant intactId="EBI-21895891">
        <id>Q96NU7</id>
    </interactant>
    <interactant intactId="EBI-2512246">
        <id>Q8NBE8</id>
        <label>KLHL23</label>
    </interactant>
    <organismsDiffer>false</organismsDiffer>
    <experiments>3</experiments>
</comment>
<comment type="similarity">
    <text evidence="9">Belongs to the metallo-dependent hydrolases superfamily. HutI family.</text>
</comment>
<comment type="sequence caution" evidence="9">
    <conflict type="erroneous initiation">
        <sequence resource="EMBL-CDS" id="BAD38660"/>
    </conflict>
    <text>Extended N-terminus.</text>
</comment>
<accession>Q96NU7</accession>
<accession>A8K463</accession>
<accession>Q68CI8</accession>
<reference key="1">
    <citation type="journal article" date="2004" name="Nat. Genet.">
        <title>Complete sequencing and characterization of 21,243 full-length human cDNAs.</title>
        <authorList>
            <person name="Ota T."/>
            <person name="Suzuki Y."/>
            <person name="Nishikawa T."/>
            <person name="Otsuki T."/>
            <person name="Sugiyama T."/>
            <person name="Irie R."/>
            <person name="Wakamatsu A."/>
            <person name="Hayashi K."/>
            <person name="Sato H."/>
            <person name="Nagai K."/>
            <person name="Kimura K."/>
            <person name="Makita H."/>
            <person name="Sekine M."/>
            <person name="Obayashi M."/>
            <person name="Nishi T."/>
            <person name="Shibahara T."/>
            <person name="Tanaka T."/>
            <person name="Ishii S."/>
            <person name="Yamamoto J."/>
            <person name="Saito K."/>
            <person name="Kawai Y."/>
            <person name="Isono Y."/>
            <person name="Nakamura Y."/>
            <person name="Nagahari K."/>
            <person name="Murakami K."/>
            <person name="Yasuda T."/>
            <person name="Iwayanagi T."/>
            <person name="Wagatsuma M."/>
            <person name="Shiratori A."/>
            <person name="Sudo H."/>
            <person name="Hosoiri T."/>
            <person name="Kaku Y."/>
            <person name="Kodaira H."/>
            <person name="Kondo H."/>
            <person name="Sugawara M."/>
            <person name="Takahashi M."/>
            <person name="Kanda K."/>
            <person name="Yokoi T."/>
            <person name="Furuya T."/>
            <person name="Kikkawa E."/>
            <person name="Omura Y."/>
            <person name="Abe K."/>
            <person name="Kamihara K."/>
            <person name="Katsuta N."/>
            <person name="Sato K."/>
            <person name="Tanikawa M."/>
            <person name="Yamazaki M."/>
            <person name="Ninomiya K."/>
            <person name="Ishibashi T."/>
            <person name="Yamashita H."/>
            <person name="Murakawa K."/>
            <person name="Fujimori K."/>
            <person name="Tanai H."/>
            <person name="Kimata M."/>
            <person name="Watanabe M."/>
            <person name="Hiraoka S."/>
            <person name="Chiba Y."/>
            <person name="Ishida S."/>
            <person name="Ono Y."/>
            <person name="Takiguchi S."/>
            <person name="Watanabe S."/>
            <person name="Yosida M."/>
            <person name="Hotuta T."/>
            <person name="Kusano J."/>
            <person name="Kanehori K."/>
            <person name="Takahashi-Fujii A."/>
            <person name="Hara H."/>
            <person name="Tanase T.-O."/>
            <person name="Nomura Y."/>
            <person name="Togiya S."/>
            <person name="Komai F."/>
            <person name="Hara R."/>
            <person name="Takeuchi K."/>
            <person name="Arita M."/>
            <person name="Imose N."/>
            <person name="Musashino K."/>
            <person name="Yuuki H."/>
            <person name="Oshima A."/>
            <person name="Sasaki N."/>
            <person name="Aotsuka S."/>
            <person name="Yoshikawa Y."/>
            <person name="Matsunawa H."/>
            <person name="Ichihara T."/>
            <person name="Shiohata N."/>
            <person name="Sano S."/>
            <person name="Moriya S."/>
            <person name="Momiyama H."/>
            <person name="Satoh N."/>
            <person name="Takami S."/>
            <person name="Terashima Y."/>
            <person name="Suzuki O."/>
            <person name="Nakagawa S."/>
            <person name="Senoh A."/>
            <person name="Mizoguchi H."/>
            <person name="Goto Y."/>
            <person name="Shimizu F."/>
            <person name="Wakebe H."/>
            <person name="Hishigaki H."/>
            <person name="Watanabe T."/>
            <person name="Sugiyama A."/>
            <person name="Takemoto M."/>
            <person name="Kawakami B."/>
            <person name="Yamazaki M."/>
            <person name="Watanabe K."/>
            <person name="Kumagai A."/>
            <person name="Itakura S."/>
            <person name="Fukuzumi Y."/>
            <person name="Fujimori Y."/>
            <person name="Komiyama M."/>
            <person name="Tashiro H."/>
            <person name="Tanigami A."/>
            <person name="Fujiwara T."/>
            <person name="Ono T."/>
            <person name="Yamada K."/>
            <person name="Fujii Y."/>
            <person name="Ozaki K."/>
            <person name="Hirao M."/>
            <person name="Ohmori Y."/>
            <person name="Kawabata A."/>
            <person name="Hikiji T."/>
            <person name="Kobatake N."/>
            <person name="Inagaki H."/>
            <person name="Ikema Y."/>
            <person name="Okamoto S."/>
            <person name="Okitani R."/>
            <person name="Kawakami T."/>
            <person name="Noguchi S."/>
            <person name="Itoh T."/>
            <person name="Shigeta K."/>
            <person name="Senba T."/>
            <person name="Matsumura K."/>
            <person name="Nakajima Y."/>
            <person name="Mizuno T."/>
            <person name="Morinaga M."/>
            <person name="Sasaki M."/>
            <person name="Togashi T."/>
            <person name="Oyama M."/>
            <person name="Hata H."/>
            <person name="Watanabe M."/>
            <person name="Komatsu T."/>
            <person name="Mizushima-Sugano J."/>
            <person name="Satoh T."/>
            <person name="Shirai Y."/>
            <person name="Takahashi Y."/>
            <person name="Nakagawa K."/>
            <person name="Okumura K."/>
            <person name="Nagase T."/>
            <person name="Nomura N."/>
            <person name="Kikuchi H."/>
            <person name="Masuho Y."/>
            <person name="Yamashita R."/>
            <person name="Nakai K."/>
            <person name="Yada T."/>
            <person name="Nakamura Y."/>
            <person name="Ohara O."/>
            <person name="Isogai T."/>
            <person name="Sugano S."/>
        </authorList>
    </citation>
    <scope>NUCLEOTIDE SEQUENCE [LARGE SCALE MRNA]</scope>
    <scope>VARIANT GLY-3</scope>
    <source>
        <tissue>Adrenal gland</tissue>
        <tissue>Liver</tissue>
    </source>
</reference>
<reference key="2">
    <citation type="journal article" date="2004" name="Oncogene">
        <title>Expression profiling and differential screening between hepatoblastomas and the corresponding normal livers: identification of high expression of the PLK1 oncogene as a poor-prognostic indicator of hepatoblastomas.</title>
        <authorList>
            <person name="Yamada S."/>
            <person name="Ohira M."/>
            <person name="Horie H."/>
            <person name="Ando K."/>
            <person name="Takayasu H."/>
            <person name="Suzuki Y."/>
            <person name="Sugano S."/>
            <person name="Hirata T."/>
            <person name="Goto T."/>
            <person name="Matsunaga T."/>
            <person name="Hiyama E."/>
            <person name="Hayashi Y."/>
            <person name="Ando H."/>
            <person name="Suita S."/>
            <person name="Kaneko M."/>
            <person name="Sasaki F."/>
            <person name="Hashizume K."/>
            <person name="Ohnuma N."/>
            <person name="Nakagawara A."/>
        </authorList>
    </citation>
    <scope>NUCLEOTIDE SEQUENCE [LARGE SCALE MRNA]</scope>
    <scope>VARIANT GLY-3</scope>
    <source>
        <tissue>Hepatoblastoma</tissue>
    </source>
</reference>
<reference key="3">
    <citation type="journal article" date="2006" name="Nature">
        <title>The finished DNA sequence of human chromosome 12.</title>
        <authorList>
            <person name="Scherer S.E."/>
            <person name="Muzny D.M."/>
            <person name="Buhay C.J."/>
            <person name="Chen R."/>
            <person name="Cree A."/>
            <person name="Ding Y."/>
            <person name="Dugan-Rocha S."/>
            <person name="Gill R."/>
            <person name="Gunaratne P."/>
            <person name="Harris R.A."/>
            <person name="Hawes A.C."/>
            <person name="Hernandez J."/>
            <person name="Hodgson A.V."/>
            <person name="Hume J."/>
            <person name="Jackson A."/>
            <person name="Khan Z.M."/>
            <person name="Kovar-Smith C."/>
            <person name="Lewis L.R."/>
            <person name="Lozado R.J."/>
            <person name="Metzker M.L."/>
            <person name="Milosavljevic A."/>
            <person name="Miner G.R."/>
            <person name="Montgomery K.T."/>
            <person name="Morgan M.B."/>
            <person name="Nazareth L.V."/>
            <person name="Scott G."/>
            <person name="Sodergren E."/>
            <person name="Song X.-Z."/>
            <person name="Steffen D."/>
            <person name="Lovering R.C."/>
            <person name="Wheeler D.A."/>
            <person name="Worley K.C."/>
            <person name="Yuan Y."/>
            <person name="Zhang Z."/>
            <person name="Adams C.Q."/>
            <person name="Ansari-Lari M.A."/>
            <person name="Ayele M."/>
            <person name="Brown M.J."/>
            <person name="Chen G."/>
            <person name="Chen Z."/>
            <person name="Clerc-Blankenburg K.P."/>
            <person name="Davis C."/>
            <person name="Delgado O."/>
            <person name="Dinh H.H."/>
            <person name="Draper H."/>
            <person name="Gonzalez-Garay M.L."/>
            <person name="Havlak P."/>
            <person name="Jackson L.R."/>
            <person name="Jacob L.S."/>
            <person name="Kelly S.H."/>
            <person name="Li L."/>
            <person name="Li Z."/>
            <person name="Liu J."/>
            <person name="Liu W."/>
            <person name="Lu J."/>
            <person name="Maheshwari M."/>
            <person name="Nguyen B.-V."/>
            <person name="Okwuonu G.O."/>
            <person name="Pasternak S."/>
            <person name="Perez L.M."/>
            <person name="Plopper F.J.H."/>
            <person name="Santibanez J."/>
            <person name="Shen H."/>
            <person name="Tabor P.E."/>
            <person name="Verduzco D."/>
            <person name="Waldron L."/>
            <person name="Wang Q."/>
            <person name="Williams G.A."/>
            <person name="Zhang J."/>
            <person name="Zhou J."/>
            <person name="Allen C.C."/>
            <person name="Amin A.G."/>
            <person name="Anyalebechi V."/>
            <person name="Bailey M."/>
            <person name="Barbaria J.A."/>
            <person name="Bimage K.E."/>
            <person name="Bryant N.P."/>
            <person name="Burch P.E."/>
            <person name="Burkett C.E."/>
            <person name="Burrell K.L."/>
            <person name="Calderon E."/>
            <person name="Cardenas V."/>
            <person name="Carter K."/>
            <person name="Casias K."/>
            <person name="Cavazos I."/>
            <person name="Cavazos S.R."/>
            <person name="Ceasar H."/>
            <person name="Chacko J."/>
            <person name="Chan S.N."/>
            <person name="Chavez D."/>
            <person name="Christopoulos C."/>
            <person name="Chu J."/>
            <person name="Cockrell R."/>
            <person name="Cox C.D."/>
            <person name="Dang M."/>
            <person name="Dathorne S.R."/>
            <person name="David R."/>
            <person name="Davis C.M."/>
            <person name="Davy-Carroll L."/>
            <person name="Deshazo D.R."/>
            <person name="Donlin J.E."/>
            <person name="D'Souza L."/>
            <person name="Eaves K.A."/>
            <person name="Egan A."/>
            <person name="Emery-Cohen A.J."/>
            <person name="Escotto M."/>
            <person name="Flagg N."/>
            <person name="Forbes L.D."/>
            <person name="Gabisi A.M."/>
            <person name="Garza M."/>
            <person name="Hamilton C."/>
            <person name="Henderson N."/>
            <person name="Hernandez O."/>
            <person name="Hines S."/>
            <person name="Hogues M.E."/>
            <person name="Huang M."/>
            <person name="Idlebird D.G."/>
            <person name="Johnson R."/>
            <person name="Jolivet A."/>
            <person name="Jones S."/>
            <person name="Kagan R."/>
            <person name="King L.M."/>
            <person name="Leal B."/>
            <person name="Lebow H."/>
            <person name="Lee S."/>
            <person name="LeVan J.M."/>
            <person name="Lewis L.C."/>
            <person name="London P."/>
            <person name="Lorensuhewa L.M."/>
            <person name="Loulseged H."/>
            <person name="Lovett D.A."/>
            <person name="Lucier A."/>
            <person name="Lucier R.L."/>
            <person name="Ma J."/>
            <person name="Madu R.C."/>
            <person name="Mapua P."/>
            <person name="Martindale A.D."/>
            <person name="Martinez E."/>
            <person name="Massey E."/>
            <person name="Mawhiney S."/>
            <person name="Meador M.G."/>
            <person name="Mendez S."/>
            <person name="Mercado C."/>
            <person name="Mercado I.C."/>
            <person name="Merritt C.E."/>
            <person name="Miner Z.L."/>
            <person name="Minja E."/>
            <person name="Mitchell T."/>
            <person name="Mohabbat F."/>
            <person name="Mohabbat K."/>
            <person name="Montgomery B."/>
            <person name="Moore N."/>
            <person name="Morris S."/>
            <person name="Munidasa M."/>
            <person name="Ngo R.N."/>
            <person name="Nguyen N.B."/>
            <person name="Nickerson E."/>
            <person name="Nwaokelemeh O.O."/>
            <person name="Nwokenkwo S."/>
            <person name="Obregon M."/>
            <person name="Oguh M."/>
            <person name="Oragunye N."/>
            <person name="Oviedo R.J."/>
            <person name="Parish B.J."/>
            <person name="Parker D.N."/>
            <person name="Parrish J."/>
            <person name="Parks K.L."/>
            <person name="Paul H.A."/>
            <person name="Payton B.A."/>
            <person name="Perez A."/>
            <person name="Perrin W."/>
            <person name="Pickens A."/>
            <person name="Primus E.L."/>
            <person name="Pu L.-L."/>
            <person name="Puazo M."/>
            <person name="Quiles M.M."/>
            <person name="Quiroz J.B."/>
            <person name="Rabata D."/>
            <person name="Reeves K."/>
            <person name="Ruiz S.J."/>
            <person name="Shao H."/>
            <person name="Sisson I."/>
            <person name="Sonaike T."/>
            <person name="Sorelle R.P."/>
            <person name="Sutton A.E."/>
            <person name="Svatek A.F."/>
            <person name="Svetz L.A."/>
            <person name="Tamerisa K.S."/>
            <person name="Taylor T.R."/>
            <person name="Teague B."/>
            <person name="Thomas N."/>
            <person name="Thorn R.D."/>
            <person name="Trejos Z.Y."/>
            <person name="Trevino B.K."/>
            <person name="Ukegbu O.N."/>
            <person name="Urban J.B."/>
            <person name="Vasquez L.I."/>
            <person name="Vera V.A."/>
            <person name="Villasana D.M."/>
            <person name="Wang L."/>
            <person name="Ward-Moore S."/>
            <person name="Warren J.T."/>
            <person name="Wei X."/>
            <person name="White F."/>
            <person name="Williamson A.L."/>
            <person name="Wleczyk R."/>
            <person name="Wooden H.S."/>
            <person name="Wooden S.H."/>
            <person name="Yen J."/>
            <person name="Yoon L."/>
            <person name="Yoon V."/>
            <person name="Zorrilla S.E."/>
            <person name="Nelson D."/>
            <person name="Kucherlapati R."/>
            <person name="Weinstock G."/>
            <person name="Gibbs R.A."/>
        </authorList>
    </citation>
    <scope>NUCLEOTIDE SEQUENCE [LARGE SCALE GENOMIC DNA]</scope>
    <scope>VARIANT GLY-3</scope>
</reference>
<reference key="4">
    <citation type="submission" date="2005-07" db="EMBL/GenBank/DDBJ databases">
        <authorList>
            <person name="Mural R.J."/>
            <person name="Istrail S."/>
            <person name="Sutton G.G."/>
            <person name="Florea L."/>
            <person name="Halpern A.L."/>
            <person name="Mobarry C.M."/>
            <person name="Lippert R."/>
            <person name="Walenz B."/>
            <person name="Shatkay H."/>
            <person name="Dew I."/>
            <person name="Miller J.R."/>
            <person name="Flanigan M.J."/>
            <person name="Edwards N.J."/>
            <person name="Bolanos R."/>
            <person name="Fasulo D."/>
            <person name="Halldorsson B.V."/>
            <person name="Hannenhalli S."/>
            <person name="Turner R."/>
            <person name="Yooseph S."/>
            <person name="Lu F."/>
            <person name="Nusskern D.R."/>
            <person name="Shue B.C."/>
            <person name="Zheng X.H."/>
            <person name="Zhong F."/>
            <person name="Delcher A.L."/>
            <person name="Huson D.H."/>
            <person name="Kravitz S.A."/>
            <person name="Mouchard L."/>
            <person name="Reinert K."/>
            <person name="Remington K.A."/>
            <person name="Clark A.G."/>
            <person name="Waterman M.S."/>
            <person name="Eichler E.E."/>
            <person name="Adams M.D."/>
            <person name="Hunkapiller M.W."/>
            <person name="Myers E.W."/>
            <person name="Venter J.C."/>
        </authorList>
    </citation>
    <scope>NUCLEOTIDE SEQUENCE [LARGE SCALE GENOMIC DNA]</scope>
</reference>
<reference key="5">
    <citation type="journal article" date="2004" name="Genome Res.">
        <title>The status, quality, and expansion of the NIH full-length cDNA project: the Mammalian Gene Collection (MGC).</title>
        <authorList>
            <consortium name="The MGC Project Team"/>
        </authorList>
    </citation>
    <scope>NUCLEOTIDE SEQUENCE [LARGE SCALE MRNA]</scope>
    <scope>VARIANT GLY-3</scope>
    <source>
        <tissue>Colon</tissue>
    </source>
</reference>
<reference key="6">
    <citation type="journal article" date="2014" name="J. Proteomics">
        <title>An enzyme assisted RP-RPLC approach for in-depth analysis of human liver phosphoproteome.</title>
        <authorList>
            <person name="Bian Y."/>
            <person name="Song C."/>
            <person name="Cheng K."/>
            <person name="Dong M."/>
            <person name="Wang F."/>
            <person name="Huang J."/>
            <person name="Sun D."/>
            <person name="Wang L."/>
            <person name="Ye M."/>
            <person name="Zou H."/>
        </authorList>
    </citation>
    <scope>IDENTIFICATION BY MASS SPECTROMETRY [LARGE SCALE ANALYSIS]</scope>
    <source>
        <tissue>Liver</tissue>
    </source>
</reference>
<evidence type="ECO:0000250" key="1"/>
<evidence type="ECO:0000250" key="2">
    <source>
        <dbReference type="UniProtKB" id="A0KF84"/>
    </source>
</evidence>
<evidence type="ECO:0000250" key="3">
    <source>
        <dbReference type="UniProtKB" id="P42084"/>
    </source>
</evidence>
<evidence type="ECO:0000250" key="4">
    <source>
        <dbReference type="UniProtKB" id="Q8U8Z6"/>
    </source>
</evidence>
<evidence type="ECO:0000269" key="5">
    <source>
    </source>
</evidence>
<evidence type="ECO:0000269" key="6">
    <source>
    </source>
</evidence>
<evidence type="ECO:0000269" key="7">
    <source>
    </source>
</evidence>
<evidence type="ECO:0000269" key="8">
    <source>
    </source>
</evidence>
<evidence type="ECO:0000305" key="9"/>
<dbReference type="EC" id="3.5.2.7"/>
<dbReference type="EMBL" id="AK054617">
    <property type="protein sequence ID" value="BAB70775.1"/>
    <property type="molecule type" value="mRNA"/>
</dbReference>
<dbReference type="EMBL" id="AK290828">
    <property type="protein sequence ID" value="BAF83517.1"/>
    <property type="molecule type" value="mRNA"/>
</dbReference>
<dbReference type="EMBL" id="AB075878">
    <property type="protein sequence ID" value="BAD38660.1"/>
    <property type="status" value="ALT_INIT"/>
    <property type="molecule type" value="mRNA"/>
</dbReference>
<dbReference type="EMBL" id="AC126174">
    <property type="status" value="NOT_ANNOTATED_CDS"/>
    <property type="molecule type" value="Genomic_DNA"/>
</dbReference>
<dbReference type="EMBL" id="CH471054">
    <property type="protein sequence ID" value="EAW97552.1"/>
    <property type="molecule type" value="Genomic_DNA"/>
</dbReference>
<dbReference type="EMBL" id="BC029146">
    <property type="protein sequence ID" value="AAH29146.1"/>
    <property type="molecule type" value="mRNA"/>
</dbReference>
<dbReference type="CCDS" id="CCDS9057.1"/>
<dbReference type="RefSeq" id="NP_689648.2">
    <property type="nucleotide sequence ID" value="NM_152435.3"/>
</dbReference>
<dbReference type="SMR" id="Q96NU7"/>
<dbReference type="BioGRID" id="126836">
    <property type="interactions" value="6"/>
</dbReference>
<dbReference type="FunCoup" id="Q96NU7">
    <property type="interactions" value="400"/>
</dbReference>
<dbReference type="IntAct" id="Q96NU7">
    <property type="interactions" value="2"/>
</dbReference>
<dbReference type="STRING" id="9606.ENSP00000266736"/>
<dbReference type="MEROPS" id="M38.980"/>
<dbReference type="iPTMnet" id="Q96NU7"/>
<dbReference type="PhosphoSitePlus" id="Q96NU7"/>
<dbReference type="BioMuta" id="AMDHD1"/>
<dbReference type="DMDM" id="311033395"/>
<dbReference type="jPOST" id="Q96NU7"/>
<dbReference type="MassIVE" id="Q96NU7"/>
<dbReference type="PaxDb" id="9606-ENSP00000266736"/>
<dbReference type="PeptideAtlas" id="Q96NU7"/>
<dbReference type="ProteomicsDB" id="77565"/>
<dbReference type="Antibodypedia" id="30145">
    <property type="antibodies" value="130 antibodies from 18 providers"/>
</dbReference>
<dbReference type="DNASU" id="144193"/>
<dbReference type="Ensembl" id="ENST00000266736.7">
    <property type="protein sequence ID" value="ENSP00000266736.2"/>
    <property type="gene ID" value="ENSG00000139344.8"/>
</dbReference>
<dbReference type="GeneID" id="144193"/>
<dbReference type="KEGG" id="hsa:144193"/>
<dbReference type="MANE-Select" id="ENST00000266736.7">
    <property type="protein sequence ID" value="ENSP00000266736.2"/>
    <property type="RefSeq nucleotide sequence ID" value="NM_152435.3"/>
    <property type="RefSeq protein sequence ID" value="NP_689648.2"/>
</dbReference>
<dbReference type="UCSC" id="uc001tel.3">
    <property type="organism name" value="human"/>
</dbReference>
<dbReference type="AGR" id="HGNC:28577"/>
<dbReference type="CTD" id="144193"/>
<dbReference type="DisGeNET" id="144193"/>
<dbReference type="GeneCards" id="AMDHD1"/>
<dbReference type="HGNC" id="HGNC:28577">
    <property type="gene designation" value="AMDHD1"/>
</dbReference>
<dbReference type="HPA" id="ENSG00000139344">
    <property type="expression patterns" value="Tissue enhanced (liver, skeletal muscle)"/>
</dbReference>
<dbReference type="MIM" id="620863">
    <property type="type" value="gene"/>
</dbReference>
<dbReference type="neXtProt" id="NX_Q96NU7"/>
<dbReference type="OpenTargets" id="ENSG00000139344"/>
<dbReference type="PharmGKB" id="PA143485297"/>
<dbReference type="VEuPathDB" id="HostDB:ENSG00000139344"/>
<dbReference type="eggNOG" id="KOG3968">
    <property type="taxonomic scope" value="Eukaryota"/>
</dbReference>
<dbReference type="GeneTree" id="ENSGT00390000008645"/>
<dbReference type="HOGENOM" id="CLU_041647_2_0_1"/>
<dbReference type="InParanoid" id="Q96NU7"/>
<dbReference type="OMA" id="CAPHARW"/>
<dbReference type="OrthoDB" id="194468at2759"/>
<dbReference type="PAN-GO" id="Q96NU7">
    <property type="GO annotations" value="2 GO annotations based on evolutionary models"/>
</dbReference>
<dbReference type="PhylomeDB" id="Q96NU7"/>
<dbReference type="TreeFam" id="TF312878"/>
<dbReference type="PathwayCommons" id="Q96NU7"/>
<dbReference type="Reactome" id="R-HSA-70921">
    <property type="pathway name" value="Histidine catabolism"/>
</dbReference>
<dbReference type="SignaLink" id="Q96NU7"/>
<dbReference type="UniPathway" id="UPA00379">
    <property type="reaction ID" value="UER00551"/>
</dbReference>
<dbReference type="BioGRID-ORCS" id="144193">
    <property type="hits" value="13 hits in 1152 CRISPR screens"/>
</dbReference>
<dbReference type="GenomeRNAi" id="144193"/>
<dbReference type="Pharos" id="Q96NU7">
    <property type="development level" value="Tbio"/>
</dbReference>
<dbReference type="PRO" id="PR:Q96NU7"/>
<dbReference type="Proteomes" id="UP000005640">
    <property type="component" value="Chromosome 12"/>
</dbReference>
<dbReference type="RNAct" id="Q96NU7">
    <property type="molecule type" value="protein"/>
</dbReference>
<dbReference type="Bgee" id="ENSG00000139344">
    <property type="expression patterns" value="Expressed in right lobe of liver and 105 other cell types or tissues"/>
</dbReference>
<dbReference type="ExpressionAtlas" id="Q96NU7">
    <property type="expression patterns" value="baseline and differential"/>
</dbReference>
<dbReference type="GO" id="GO:0005829">
    <property type="term" value="C:cytosol"/>
    <property type="evidence" value="ECO:0000304"/>
    <property type="project" value="Reactome"/>
</dbReference>
<dbReference type="GO" id="GO:0016812">
    <property type="term" value="F:hydrolase activity, acting on carbon-nitrogen (but not peptide) bonds, in cyclic amides"/>
    <property type="evidence" value="ECO:0000304"/>
    <property type="project" value="Reactome"/>
</dbReference>
<dbReference type="GO" id="GO:0050480">
    <property type="term" value="F:imidazolonepropionase activity"/>
    <property type="evidence" value="ECO:0000318"/>
    <property type="project" value="GO_Central"/>
</dbReference>
<dbReference type="GO" id="GO:0046872">
    <property type="term" value="F:metal ion binding"/>
    <property type="evidence" value="ECO:0007669"/>
    <property type="project" value="UniProtKB-KW"/>
</dbReference>
<dbReference type="GO" id="GO:0006548">
    <property type="term" value="P:L-histidine catabolic process"/>
    <property type="evidence" value="ECO:0000318"/>
    <property type="project" value="GO_Central"/>
</dbReference>
<dbReference type="GO" id="GO:0019556">
    <property type="term" value="P:L-histidine catabolic process to glutamate and formamide"/>
    <property type="evidence" value="ECO:0007669"/>
    <property type="project" value="UniProtKB-UniPathway"/>
</dbReference>
<dbReference type="GO" id="GO:0019557">
    <property type="term" value="P:L-histidine catabolic process to glutamate and formate"/>
    <property type="evidence" value="ECO:0007669"/>
    <property type="project" value="UniProtKB-UniPathway"/>
</dbReference>
<dbReference type="CDD" id="cd01296">
    <property type="entry name" value="Imidazolone-5PH"/>
    <property type="match status" value="1"/>
</dbReference>
<dbReference type="FunFam" id="3.20.20.140:FF:000007">
    <property type="entry name" value="Imidazolonepropionase"/>
    <property type="match status" value="1"/>
</dbReference>
<dbReference type="Gene3D" id="3.20.20.140">
    <property type="entry name" value="Metal-dependent hydrolases"/>
    <property type="match status" value="1"/>
</dbReference>
<dbReference type="Gene3D" id="2.30.40.10">
    <property type="entry name" value="Urease, subunit C, domain 1"/>
    <property type="match status" value="1"/>
</dbReference>
<dbReference type="InterPro" id="IPR006680">
    <property type="entry name" value="Amidohydro-rel"/>
</dbReference>
<dbReference type="InterPro" id="IPR005920">
    <property type="entry name" value="HutI"/>
</dbReference>
<dbReference type="InterPro" id="IPR011059">
    <property type="entry name" value="Metal-dep_hydrolase_composite"/>
</dbReference>
<dbReference type="InterPro" id="IPR032466">
    <property type="entry name" value="Metal_Hydrolase"/>
</dbReference>
<dbReference type="NCBIfam" id="TIGR01224">
    <property type="entry name" value="hutI"/>
    <property type="match status" value="1"/>
</dbReference>
<dbReference type="PANTHER" id="PTHR42752">
    <property type="entry name" value="IMIDAZOLONEPROPIONASE"/>
    <property type="match status" value="1"/>
</dbReference>
<dbReference type="PANTHER" id="PTHR42752:SF1">
    <property type="entry name" value="IMIDAZOLONEPROPIONASE-RELATED"/>
    <property type="match status" value="1"/>
</dbReference>
<dbReference type="Pfam" id="PF01979">
    <property type="entry name" value="Amidohydro_1"/>
    <property type="match status" value="1"/>
</dbReference>
<dbReference type="SUPFAM" id="SSF51338">
    <property type="entry name" value="Composite domain of metallo-dependent hydrolases"/>
    <property type="match status" value="1"/>
</dbReference>
<dbReference type="SUPFAM" id="SSF51556">
    <property type="entry name" value="Metallo-dependent hydrolases"/>
    <property type="match status" value="1"/>
</dbReference>
<proteinExistence type="evidence at protein level"/>
<sequence length="426" mass="46743">MASGHSLLLENAQQVVLVCARGERFLARDALRSLAVLEGASLVVGKDGFIKAIGPADVIQRQFSGETFEEIIDCSGKCILPGLVDAHTHPVWAGERVHEFAMKLAGATYMEIHQAGGGIHFTVERTRQATEEELFRSLQQRLQCMMRAGTTLVECKSGYGLDLETELKMLRVIERARRELDIGISATYCGAHSVPKGKTATEAADDIINNHLPKLKELGRNGEIHVDNIDVFCEKGVFDLDSTRRILQRGKDIGLQINFHGDELHPMKAAELGAELGAQAISHLEEVSDEGIVAMATARCSAILLPTTAYMLRLKQPRARKMLDEGVIVALGSDFNPNAYCFSMPMVMHLACVNMRMSMPEALAAATINAAYALGKSHTHGSLEVGKQGDLIIINSSRWEHLIYQFGGHHELIEYVIAKGKLIYKT</sequence>
<keyword id="KW-0369">Histidine metabolism</keyword>
<keyword id="KW-0378">Hydrolase</keyword>
<keyword id="KW-0408">Iron</keyword>
<keyword id="KW-0479">Metal-binding</keyword>
<keyword id="KW-1267">Proteomics identification</keyword>
<keyword id="KW-1185">Reference proteome</keyword>
<keyword id="KW-0862">Zinc</keyword>